<reference key="1">
    <citation type="journal article" date="1994" name="Infect. Immun.">
        <title>Cloning and characterization of a new protease gene (prtH) from Porphyromonas gingivalis.</title>
        <authorList>
            <person name="Fletcher H.M."/>
            <person name="Schenkein H.A."/>
            <person name="Macrina F.L."/>
        </authorList>
    </citation>
    <scope>NUCLEOTIDE SEQUENCE [GENOMIC DNA]</scope>
    <source>
        <strain>ATCC BAA-308 / W83</strain>
    </source>
</reference>
<reference key="2">
    <citation type="journal article" date="1994" name="Infect. Immun.">
        <authorList>
            <person name="Fletcher H.M."/>
            <person name="Schenkein H.A."/>
            <person name="Macrina F.L."/>
        </authorList>
    </citation>
    <scope>ERRATUM OF PUBMED:7927685</scope>
</reference>
<gene>
    <name type="primary">prtH</name>
</gene>
<sequence>MHPSTMRCMHLRPVTMHPTSRMLCWKRRLRPKGVRSPEAIRGRIQGTWRQKTVDLPAGTEICCFPSLPKAPICSTSTLMRLRSKTNAKRADFTETFESSTHGEAPAEWTTIDADGDGQGWLCLSSGQLDWLTAHGGTNVVSSFSWNGMALNPDNYLISKDVTGATKVKYYYAVNDGFPGDHYAVMISKTGTNAGDFTVVFEETPNGINKGGARFGLSTEADGAKPQSVWIERTVDLPAGTKYVAFRHYNCSDLNYILLDDIQFTMGGSPTPTDYTYTVYRDGTKIKEGLTETTFEEDGVATGNHEYCVEVKYTAGVSPKKCVNVTVNSTQFNPVKNLKAQPDGGDVVLKWEAPSAKKTEGSREVKRIGDGLFVTIEPANDVRANEAKVVLAADNVWGDNTGYQFLLDADHNTFGSVIPATGPLFTGTASSDLYSANFEYLIPANADPVVTTQNIIVTGQGEVVIPGGVYDYCITNPEPASGKMWIAGDGGNQPARYDDFTFEAGKKYTFTMRRAGMGDGTDMEVEDDSPASYTYTVYRDGTKIKEGLTETTYRDAGLSAQSHEYCVEVKYTAGVSPKVCVDYIPDGVEDVTVQKPHTLTVVGKTITVSWQGEAMIYDMNGRRLAAGRNTVVYTAQGGYYAVMVVVDGKSYVEETRYQVNLSWTRRLCADTSKHRSVIVSEYESVARPPFKEVGRLRFYAYYSNILLKQFVPKSCMKRLSYYLPHCKKGSFLRFPRSSTVITVCQFSWLEYLPVTQGVAGSSPVHTAKIRSCVEIVFRHSSIFVCYRSTGKYNYRMRLFNMLGKNFLRTKQKCLSLLRSAWDIGIKLVLFQEGRYMESPGQSDEERRTTIDFYGNGRYLLFRHSELLVENGYQVKAVVTMLGTKPMGRGHKVSPSMVKLYAQELGLPILQPDNLNEESFLDELRTYQPHLQIVVAFRMLPRSVWQMPPMGTINLHGSLLPMYRGAAPIQPRDTPWRYGKRELPPSASGMR</sequence>
<comment type="function">
    <text>Cleaves human complement component C3. May enable P.gingivalis to evade complement-mediated killing during the immune response. Plays an important role in soft tissue infections and is a virulence factor.</text>
</comment>
<comment type="subcellular location">
    <subcellularLocation>
        <location>Cytoplasmic vesicle</location>
    </subcellularLocation>
    <text>In membrane vesicles.</text>
</comment>
<comment type="similarity">
    <text evidence="2">Belongs to the peptidase C25 family.</text>
</comment>
<name>PRTH_PORGI</name>
<keyword id="KW-0002">3D-structure</keyword>
<keyword id="KW-0968">Cytoplasmic vesicle</keyword>
<keyword id="KW-0378">Hydrolase</keyword>
<keyword id="KW-0645">Protease</keyword>
<keyword id="KW-0677">Repeat</keyword>
<keyword id="KW-0788">Thiol protease</keyword>
<keyword id="KW-0843">Virulence</keyword>
<protein>
    <recommendedName>
        <fullName>Protease PrtH</fullName>
        <ecNumber>3.4.22.-</ecNumber>
    </recommendedName>
</protein>
<feature type="chain" id="PRO_0000216898" description="Protease PrtH">
    <location>
        <begin position="1"/>
        <end position="989"/>
    </location>
</feature>
<feature type="repeat">
    <location>
        <begin position="270"/>
        <end position="323"/>
    </location>
</feature>
<feature type="repeat">
    <location>
        <begin position="528"/>
        <end position="581"/>
    </location>
</feature>
<feature type="region of interest" description="Disordered" evidence="1">
    <location>
        <begin position="969"/>
        <end position="989"/>
    </location>
</feature>
<feature type="strand" evidence="3">
    <location>
        <begin position="367"/>
        <end position="377"/>
    </location>
</feature>
<feature type="strand" evidence="3">
    <location>
        <begin position="385"/>
        <end position="393"/>
    </location>
</feature>
<feature type="strand" evidence="3">
    <location>
        <begin position="397"/>
        <end position="399"/>
    </location>
</feature>
<feature type="strand" evidence="3">
    <location>
        <begin position="402"/>
        <end position="407"/>
    </location>
</feature>
<feature type="turn" evidence="3">
    <location>
        <begin position="414"/>
        <end position="416"/>
    </location>
</feature>
<feature type="strand" evidence="3">
    <location>
        <begin position="419"/>
        <end position="421"/>
    </location>
</feature>
<feature type="strand" evidence="3">
    <location>
        <begin position="423"/>
        <end position="426"/>
    </location>
</feature>
<feature type="turn" evidence="3">
    <location>
        <begin position="430"/>
        <end position="436"/>
    </location>
</feature>
<feature type="strand" evidence="3">
    <location>
        <begin position="438"/>
        <end position="442"/>
    </location>
</feature>
<feature type="strand" evidence="3">
    <location>
        <begin position="457"/>
        <end position="477"/>
    </location>
</feature>
<feature type="helix" evidence="3">
    <location>
        <begin position="478"/>
        <end position="480"/>
    </location>
</feature>
<feature type="strand" evidence="3">
    <location>
        <begin position="482"/>
        <end position="485"/>
    </location>
</feature>
<feature type="strand" evidence="3">
    <location>
        <begin position="490"/>
        <end position="492"/>
    </location>
</feature>
<feature type="strand" evidence="3">
    <location>
        <begin position="494"/>
        <end position="501"/>
    </location>
</feature>
<feature type="strand" evidence="3">
    <location>
        <begin position="505"/>
        <end position="514"/>
    </location>
</feature>
<dbReference type="EC" id="3.4.22.-"/>
<dbReference type="EMBL" id="L27483">
    <property type="protein sequence ID" value="AAA51298.1"/>
    <property type="molecule type" value="Genomic_DNA"/>
</dbReference>
<dbReference type="PDB" id="9ISP">
    <property type="method" value="X-ray"/>
    <property type="resolution" value="2.21 A"/>
    <property type="chains" value="A=361-579"/>
</dbReference>
<dbReference type="PDBsum" id="9ISP"/>
<dbReference type="SMR" id="P46071"/>
<dbReference type="STRING" id="242619.PG_2024"/>
<dbReference type="MEROPS" id="C25.001"/>
<dbReference type="eggNOG" id="COG1974">
    <property type="taxonomic scope" value="Bacteria"/>
</dbReference>
<dbReference type="GO" id="GO:0031410">
    <property type="term" value="C:cytoplasmic vesicle"/>
    <property type="evidence" value="ECO:0007669"/>
    <property type="project" value="UniProtKB-KW"/>
</dbReference>
<dbReference type="GO" id="GO:0005829">
    <property type="term" value="C:cytosol"/>
    <property type="evidence" value="ECO:0007669"/>
    <property type="project" value="TreeGrafter"/>
</dbReference>
<dbReference type="GO" id="GO:0008234">
    <property type="term" value="F:cysteine-type peptidase activity"/>
    <property type="evidence" value="ECO:0007669"/>
    <property type="project" value="UniProtKB-KW"/>
</dbReference>
<dbReference type="GO" id="GO:0004479">
    <property type="term" value="F:methionyl-tRNA formyltransferase activity"/>
    <property type="evidence" value="ECO:0007669"/>
    <property type="project" value="TreeGrafter"/>
</dbReference>
<dbReference type="GO" id="GO:0006508">
    <property type="term" value="P:proteolysis"/>
    <property type="evidence" value="ECO:0007669"/>
    <property type="project" value="UniProtKB-KW"/>
</dbReference>
<dbReference type="FunFam" id="2.60.40.10:FF:002823">
    <property type="entry name" value="Gingipain R1"/>
    <property type="match status" value="1"/>
</dbReference>
<dbReference type="Gene3D" id="2.60.120.200">
    <property type="match status" value="1"/>
</dbReference>
<dbReference type="Gene3D" id="3.40.50.170">
    <property type="entry name" value="Formyl transferase, N-terminal domain"/>
    <property type="match status" value="1"/>
</dbReference>
<dbReference type="Gene3D" id="2.60.40.10">
    <property type="entry name" value="Immunoglobulins"/>
    <property type="match status" value="2"/>
</dbReference>
<dbReference type="InterPro" id="IPR011628">
    <property type="entry name" value="Cleaved_adhesin"/>
</dbReference>
<dbReference type="InterPro" id="IPR002376">
    <property type="entry name" value="Formyl_transf_N"/>
</dbReference>
<dbReference type="InterPro" id="IPR036477">
    <property type="entry name" value="Formyl_transf_N_sf"/>
</dbReference>
<dbReference type="InterPro" id="IPR013783">
    <property type="entry name" value="Ig-like_fold"/>
</dbReference>
<dbReference type="InterPro" id="IPR018832">
    <property type="entry name" value="Pept_C25_gingipain_C"/>
</dbReference>
<dbReference type="NCBIfam" id="NF038128">
    <property type="entry name" value="choice_anch_J"/>
    <property type="match status" value="1"/>
</dbReference>
<dbReference type="PANTHER" id="PTHR11138">
    <property type="entry name" value="METHIONYL-TRNA FORMYLTRANSFERASE"/>
    <property type="match status" value="1"/>
</dbReference>
<dbReference type="PANTHER" id="PTHR11138:SF5">
    <property type="entry name" value="METHIONYL-TRNA FORMYLTRANSFERASE, MITOCHONDRIAL"/>
    <property type="match status" value="1"/>
</dbReference>
<dbReference type="Pfam" id="PF07675">
    <property type="entry name" value="Cleaved_Adhesin"/>
    <property type="match status" value="1"/>
</dbReference>
<dbReference type="Pfam" id="PF10365">
    <property type="entry name" value="DUF2436"/>
    <property type="match status" value="1"/>
</dbReference>
<dbReference type="Pfam" id="PF00551">
    <property type="entry name" value="Formyl_trans_N"/>
    <property type="match status" value="1"/>
</dbReference>
<dbReference type="SUPFAM" id="SSF53328">
    <property type="entry name" value="Formyltransferase"/>
    <property type="match status" value="1"/>
</dbReference>
<evidence type="ECO:0000256" key="1">
    <source>
        <dbReference type="SAM" id="MobiDB-lite"/>
    </source>
</evidence>
<evidence type="ECO:0000305" key="2"/>
<evidence type="ECO:0007829" key="3">
    <source>
        <dbReference type="PDB" id="9ISP"/>
    </source>
</evidence>
<organism>
    <name type="scientific">Porphyromonas gingivalis (strain ATCC BAA-308 / W83)</name>
    <dbReference type="NCBI Taxonomy" id="242619"/>
    <lineage>
        <taxon>Bacteria</taxon>
        <taxon>Pseudomonadati</taxon>
        <taxon>Bacteroidota</taxon>
        <taxon>Bacteroidia</taxon>
        <taxon>Bacteroidales</taxon>
        <taxon>Porphyromonadaceae</taxon>
        <taxon>Porphyromonas</taxon>
    </lineage>
</organism>
<proteinExistence type="evidence at protein level"/>
<accession>P46071</accession>